<dbReference type="EC" id="3.1.21.10" evidence="1"/>
<dbReference type="EMBL" id="CP001025">
    <property type="protein sequence ID" value="ACB63106.1"/>
    <property type="molecule type" value="Genomic_DNA"/>
</dbReference>
<dbReference type="RefSeq" id="WP_012363105.1">
    <property type="nucleotide sequence ID" value="NC_010551.1"/>
</dbReference>
<dbReference type="SMR" id="B1YTE1"/>
<dbReference type="KEGG" id="bac:BamMC406_0609"/>
<dbReference type="HOGENOM" id="CLU_091257_3_1_4"/>
<dbReference type="OrthoDB" id="9805499at2"/>
<dbReference type="Proteomes" id="UP000001680">
    <property type="component" value="Chromosome 1"/>
</dbReference>
<dbReference type="GO" id="GO:0005737">
    <property type="term" value="C:cytoplasm"/>
    <property type="evidence" value="ECO:0007669"/>
    <property type="project" value="UniProtKB-SubCell"/>
</dbReference>
<dbReference type="GO" id="GO:0048476">
    <property type="term" value="C:Holliday junction resolvase complex"/>
    <property type="evidence" value="ECO:0007669"/>
    <property type="project" value="UniProtKB-UniRule"/>
</dbReference>
<dbReference type="GO" id="GO:0008821">
    <property type="term" value="F:crossover junction DNA endonuclease activity"/>
    <property type="evidence" value="ECO:0007669"/>
    <property type="project" value="UniProtKB-UniRule"/>
</dbReference>
<dbReference type="GO" id="GO:0003677">
    <property type="term" value="F:DNA binding"/>
    <property type="evidence" value="ECO:0007669"/>
    <property type="project" value="UniProtKB-KW"/>
</dbReference>
<dbReference type="GO" id="GO:0000287">
    <property type="term" value="F:magnesium ion binding"/>
    <property type="evidence" value="ECO:0007669"/>
    <property type="project" value="UniProtKB-UniRule"/>
</dbReference>
<dbReference type="GO" id="GO:0006310">
    <property type="term" value="P:DNA recombination"/>
    <property type="evidence" value="ECO:0007669"/>
    <property type="project" value="UniProtKB-UniRule"/>
</dbReference>
<dbReference type="GO" id="GO:0006281">
    <property type="term" value="P:DNA repair"/>
    <property type="evidence" value="ECO:0007669"/>
    <property type="project" value="UniProtKB-UniRule"/>
</dbReference>
<dbReference type="CDD" id="cd16962">
    <property type="entry name" value="RuvC"/>
    <property type="match status" value="1"/>
</dbReference>
<dbReference type="FunFam" id="3.30.420.10:FF:000002">
    <property type="entry name" value="Crossover junction endodeoxyribonuclease RuvC"/>
    <property type="match status" value="1"/>
</dbReference>
<dbReference type="Gene3D" id="3.30.420.10">
    <property type="entry name" value="Ribonuclease H-like superfamily/Ribonuclease H"/>
    <property type="match status" value="1"/>
</dbReference>
<dbReference type="HAMAP" id="MF_00034">
    <property type="entry name" value="RuvC"/>
    <property type="match status" value="1"/>
</dbReference>
<dbReference type="InterPro" id="IPR012337">
    <property type="entry name" value="RNaseH-like_sf"/>
</dbReference>
<dbReference type="InterPro" id="IPR036397">
    <property type="entry name" value="RNaseH_sf"/>
</dbReference>
<dbReference type="InterPro" id="IPR020563">
    <property type="entry name" value="X-over_junc_endoDNase_Mg_BS"/>
</dbReference>
<dbReference type="InterPro" id="IPR002176">
    <property type="entry name" value="X-over_junc_endoDNase_RuvC"/>
</dbReference>
<dbReference type="NCBIfam" id="TIGR00228">
    <property type="entry name" value="ruvC"/>
    <property type="match status" value="1"/>
</dbReference>
<dbReference type="PANTHER" id="PTHR30194">
    <property type="entry name" value="CROSSOVER JUNCTION ENDODEOXYRIBONUCLEASE RUVC"/>
    <property type="match status" value="1"/>
</dbReference>
<dbReference type="PANTHER" id="PTHR30194:SF3">
    <property type="entry name" value="CROSSOVER JUNCTION ENDODEOXYRIBONUCLEASE RUVC"/>
    <property type="match status" value="1"/>
</dbReference>
<dbReference type="Pfam" id="PF02075">
    <property type="entry name" value="RuvC"/>
    <property type="match status" value="1"/>
</dbReference>
<dbReference type="PRINTS" id="PR00696">
    <property type="entry name" value="RSOLVASERUVC"/>
</dbReference>
<dbReference type="SUPFAM" id="SSF53098">
    <property type="entry name" value="Ribonuclease H-like"/>
    <property type="match status" value="1"/>
</dbReference>
<dbReference type="PROSITE" id="PS01321">
    <property type="entry name" value="RUVC"/>
    <property type="match status" value="1"/>
</dbReference>
<gene>
    <name evidence="1" type="primary">ruvC</name>
    <name type="ordered locus">BamMC406_0609</name>
</gene>
<protein>
    <recommendedName>
        <fullName evidence="1">Crossover junction endodeoxyribonuclease RuvC</fullName>
        <ecNumber evidence="1">3.1.21.10</ecNumber>
    </recommendedName>
    <alternativeName>
        <fullName evidence="1">Holliday junction nuclease RuvC</fullName>
    </alternativeName>
    <alternativeName>
        <fullName evidence="1">Holliday junction resolvase RuvC</fullName>
    </alternativeName>
</protein>
<sequence>MRILGIDPGLRVTGFGVIDVSGHRLAYVASGVIRTPTADLATRLGTIFQGVSTLVREHAPDQAAIEQVFVNVNPQSTLLLGQARGAAICGLVSGGLPVAEYTALQLKQAVVGYGRATKSQMQEMVTRLLNLTGQPGSDAADALGMAICHAHSGSTLGAIGAIGGLAPALAKKGLRVRRGRLVR</sequence>
<accession>B1YTE1</accession>
<organism>
    <name type="scientific">Burkholderia ambifaria (strain MC40-6)</name>
    <dbReference type="NCBI Taxonomy" id="398577"/>
    <lineage>
        <taxon>Bacteria</taxon>
        <taxon>Pseudomonadati</taxon>
        <taxon>Pseudomonadota</taxon>
        <taxon>Betaproteobacteria</taxon>
        <taxon>Burkholderiales</taxon>
        <taxon>Burkholderiaceae</taxon>
        <taxon>Burkholderia</taxon>
        <taxon>Burkholderia cepacia complex</taxon>
    </lineage>
</organism>
<reference key="1">
    <citation type="submission" date="2008-04" db="EMBL/GenBank/DDBJ databases">
        <title>Complete sequence of chromosome 1 of Burkholderia ambifaria MC40-6.</title>
        <authorList>
            <person name="Copeland A."/>
            <person name="Lucas S."/>
            <person name="Lapidus A."/>
            <person name="Glavina del Rio T."/>
            <person name="Dalin E."/>
            <person name="Tice H."/>
            <person name="Pitluck S."/>
            <person name="Chain P."/>
            <person name="Malfatti S."/>
            <person name="Shin M."/>
            <person name="Vergez L."/>
            <person name="Lang D."/>
            <person name="Schmutz J."/>
            <person name="Larimer F."/>
            <person name="Land M."/>
            <person name="Hauser L."/>
            <person name="Kyrpides N."/>
            <person name="Lykidis A."/>
            <person name="Ramette A."/>
            <person name="Konstantinidis K."/>
            <person name="Tiedje J."/>
            <person name="Richardson P."/>
        </authorList>
    </citation>
    <scope>NUCLEOTIDE SEQUENCE [LARGE SCALE GENOMIC DNA]</scope>
    <source>
        <strain>MC40-6</strain>
    </source>
</reference>
<comment type="function">
    <text evidence="1">The RuvA-RuvB-RuvC complex processes Holliday junction (HJ) DNA during genetic recombination and DNA repair. Endonuclease that resolves HJ intermediates. Cleaves cruciform DNA by making single-stranded nicks across the HJ at symmetrical positions within the homologous arms, yielding a 5'-phosphate and a 3'-hydroxyl group; requires a central core of homology in the junction. The consensus cleavage sequence is 5'-(A/T)TT(C/G)-3'. Cleavage occurs on the 3'-side of the TT dinucleotide at the point of strand exchange. HJ branch migration catalyzed by RuvA-RuvB allows RuvC to scan DNA until it finds its consensus sequence, where it cleaves and resolves the cruciform DNA.</text>
</comment>
<comment type="catalytic activity">
    <reaction evidence="1">
        <text>Endonucleolytic cleavage at a junction such as a reciprocal single-stranded crossover between two homologous DNA duplexes (Holliday junction).</text>
        <dbReference type="EC" id="3.1.21.10"/>
    </reaction>
</comment>
<comment type="cofactor">
    <cofactor evidence="1">
        <name>Mg(2+)</name>
        <dbReference type="ChEBI" id="CHEBI:18420"/>
    </cofactor>
    <text evidence="1">Binds 2 Mg(2+) ion per subunit.</text>
</comment>
<comment type="subunit">
    <text evidence="1">Homodimer which binds Holliday junction (HJ) DNA. The HJ becomes 2-fold symmetrical on binding to RuvC with unstacked arms; it has a different conformation from HJ DNA in complex with RuvA. In the full resolvosome a probable DNA-RuvA(4)-RuvB(12)-RuvC(2) complex forms which resolves the HJ.</text>
</comment>
<comment type="subcellular location">
    <subcellularLocation>
        <location evidence="1">Cytoplasm</location>
    </subcellularLocation>
</comment>
<comment type="similarity">
    <text evidence="1">Belongs to the RuvC family.</text>
</comment>
<name>RUVC_BURA4</name>
<keyword id="KW-0963">Cytoplasm</keyword>
<keyword id="KW-0227">DNA damage</keyword>
<keyword id="KW-0233">DNA recombination</keyword>
<keyword id="KW-0234">DNA repair</keyword>
<keyword id="KW-0238">DNA-binding</keyword>
<keyword id="KW-0255">Endonuclease</keyword>
<keyword id="KW-0378">Hydrolase</keyword>
<keyword id="KW-0460">Magnesium</keyword>
<keyword id="KW-0479">Metal-binding</keyword>
<keyword id="KW-0540">Nuclease</keyword>
<evidence type="ECO:0000255" key="1">
    <source>
        <dbReference type="HAMAP-Rule" id="MF_00034"/>
    </source>
</evidence>
<proteinExistence type="inferred from homology"/>
<feature type="chain" id="PRO_1000090505" description="Crossover junction endodeoxyribonuclease RuvC">
    <location>
        <begin position="1"/>
        <end position="183"/>
    </location>
</feature>
<feature type="active site" evidence="1">
    <location>
        <position position="7"/>
    </location>
</feature>
<feature type="active site" evidence="1">
    <location>
        <position position="66"/>
    </location>
</feature>
<feature type="active site" evidence="1">
    <location>
        <position position="138"/>
    </location>
</feature>
<feature type="binding site" evidence="1">
    <location>
        <position position="7"/>
    </location>
    <ligand>
        <name>Mg(2+)</name>
        <dbReference type="ChEBI" id="CHEBI:18420"/>
        <label>1</label>
    </ligand>
</feature>
<feature type="binding site" evidence="1">
    <location>
        <position position="66"/>
    </location>
    <ligand>
        <name>Mg(2+)</name>
        <dbReference type="ChEBI" id="CHEBI:18420"/>
        <label>2</label>
    </ligand>
</feature>
<feature type="binding site" evidence="1">
    <location>
        <position position="138"/>
    </location>
    <ligand>
        <name>Mg(2+)</name>
        <dbReference type="ChEBI" id="CHEBI:18420"/>
        <label>1</label>
    </ligand>
</feature>